<comment type="function">
    <text>This protein is required for high-affinity potassium transport.</text>
</comment>
<comment type="subcellular location">
    <subcellularLocation>
        <location>Membrane</location>
        <topology>Multi-pass membrane protein</topology>
    </subcellularLocation>
</comment>
<comment type="similarity">
    <text evidence="3">Belongs to the TrkH potassium transport family.</text>
</comment>
<keyword id="KW-0325">Glycoprotein</keyword>
<keyword id="KW-0406">Ion transport</keyword>
<keyword id="KW-0472">Membrane</keyword>
<keyword id="KW-0630">Potassium</keyword>
<keyword id="KW-0633">Potassium transport</keyword>
<keyword id="KW-0812">Transmembrane</keyword>
<keyword id="KW-1133">Transmembrane helix</keyword>
<keyword id="KW-0813">Transport</keyword>
<proteinExistence type="inferred from homology"/>
<reference key="1">
    <citation type="journal article" date="1991" name="Gene">
        <title>Structural and functional conservation between the high-affinity K+ transporters of Saccharomyces uvarum and Saccharomyces cerevisiae.</title>
        <authorList>
            <person name="Anderson J.A."/>
            <person name="Best L.A."/>
            <person name="Gaber R.F."/>
        </authorList>
    </citation>
    <scope>NUCLEOTIDE SEQUENCE [GENOMIC DNA]</scope>
    <source>
        <strain>R1668</strain>
    </source>
</reference>
<feature type="chain" id="PRO_0000070460" description="High-affinity potassium transport protein">
    <location>
        <begin position="1"/>
        <end position="1241"/>
    </location>
</feature>
<feature type="transmembrane region" description="Helical" evidence="1">
    <location>
        <begin position="49"/>
        <end position="70"/>
    </location>
</feature>
<feature type="transmembrane region" description="Helical" evidence="1">
    <location>
        <begin position="78"/>
        <end position="98"/>
    </location>
</feature>
<feature type="transmembrane region" description="Helical" evidence="1">
    <location>
        <begin position="107"/>
        <end position="127"/>
    </location>
</feature>
<feature type="transmembrane region" description="Helical" evidence="1">
    <location>
        <begin position="784"/>
        <end position="806"/>
    </location>
</feature>
<feature type="transmembrane region" description="Helical" evidence="1">
    <location>
        <begin position="819"/>
        <end position="840"/>
    </location>
</feature>
<feature type="transmembrane region" description="Helical" evidence="1">
    <location>
        <begin position="844"/>
        <end position="864"/>
    </location>
</feature>
<feature type="transmembrane region" description="Helical" evidence="1">
    <location>
        <begin position="868"/>
        <end position="888"/>
    </location>
</feature>
<feature type="transmembrane region" description="Helical" evidence="1">
    <location>
        <begin position="904"/>
        <end position="924"/>
    </location>
</feature>
<feature type="transmembrane region" description="Helical" evidence="1">
    <location>
        <begin position="929"/>
        <end position="949"/>
    </location>
</feature>
<feature type="transmembrane region" description="Helical" evidence="1">
    <location>
        <begin position="977"/>
        <end position="997"/>
    </location>
</feature>
<feature type="transmembrane region" description="Helical" evidence="1">
    <location>
        <begin position="1084"/>
        <end position="1104"/>
    </location>
</feature>
<feature type="transmembrane region" description="Helical" evidence="1">
    <location>
        <begin position="1117"/>
        <end position="1137"/>
    </location>
</feature>
<feature type="region of interest" description="Disordered" evidence="2">
    <location>
        <begin position="162"/>
        <end position="241"/>
    </location>
</feature>
<feature type="region of interest" description="Disordered" evidence="2">
    <location>
        <begin position="253"/>
        <end position="316"/>
    </location>
</feature>
<feature type="region of interest" description="Disordered" evidence="2">
    <location>
        <begin position="329"/>
        <end position="570"/>
    </location>
</feature>
<feature type="region of interest" description="Disordered" evidence="2">
    <location>
        <begin position="677"/>
        <end position="714"/>
    </location>
</feature>
<feature type="region of interest" description="Disordered" evidence="2">
    <location>
        <begin position="1011"/>
        <end position="1073"/>
    </location>
</feature>
<feature type="region of interest" description="Disordered" evidence="2">
    <location>
        <begin position="1222"/>
        <end position="1241"/>
    </location>
</feature>
<feature type="compositionally biased region" description="Polar residues" evidence="2">
    <location>
        <begin position="164"/>
        <end position="177"/>
    </location>
</feature>
<feature type="compositionally biased region" description="Basic and acidic residues" evidence="2">
    <location>
        <begin position="181"/>
        <end position="191"/>
    </location>
</feature>
<feature type="compositionally biased region" description="Basic and acidic residues" evidence="2">
    <location>
        <begin position="199"/>
        <end position="214"/>
    </location>
</feature>
<feature type="compositionally biased region" description="Low complexity" evidence="2">
    <location>
        <begin position="215"/>
        <end position="238"/>
    </location>
</feature>
<feature type="compositionally biased region" description="Polar residues" evidence="2">
    <location>
        <begin position="268"/>
        <end position="280"/>
    </location>
</feature>
<feature type="compositionally biased region" description="Polar residues" evidence="2">
    <location>
        <begin position="345"/>
        <end position="365"/>
    </location>
</feature>
<feature type="compositionally biased region" description="Basic and acidic residues" evidence="2">
    <location>
        <begin position="366"/>
        <end position="375"/>
    </location>
</feature>
<feature type="compositionally biased region" description="Polar residues" evidence="2">
    <location>
        <begin position="380"/>
        <end position="411"/>
    </location>
</feature>
<feature type="compositionally biased region" description="Basic residues" evidence="2">
    <location>
        <begin position="446"/>
        <end position="455"/>
    </location>
</feature>
<feature type="compositionally biased region" description="Basic residues" evidence="2">
    <location>
        <begin position="482"/>
        <end position="497"/>
    </location>
</feature>
<feature type="compositionally biased region" description="Polar residues" evidence="2">
    <location>
        <begin position="498"/>
        <end position="509"/>
    </location>
</feature>
<feature type="compositionally biased region" description="Acidic residues" evidence="2">
    <location>
        <begin position="520"/>
        <end position="545"/>
    </location>
</feature>
<feature type="compositionally biased region" description="Low complexity" evidence="2">
    <location>
        <begin position="561"/>
        <end position="570"/>
    </location>
</feature>
<feature type="compositionally biased region" description="Polar residues" evidence="2">
    <location>
        <begin position="684"/>
        <end position="708"/>
    </location>
</feature>
<feature type="compositionally biased region" description="Acidic residues" evidence="2">
    <location>
        <begin position="1021"/>
        <end position="1041"/>
    </location>
</feature>
<feature type="compositionally biased region" description="Basic residues" evidence="2">
    <location>
        <begin position="1050"/>
        <end position="1062"/>
    </location>
</feature>
<feature type="compositionally biased region" description="Basic residues" evidence="2">
    <location>
        <begin position="1226"/>
        <end position="1241"/>
    </location>
</feature>
<feature type="glycosylation site" description="N-linked (GlcNAc...) asparagine" evidence="1">
    <location>
        <position position="100"/>
    </location>
</feature>
<feature type="glycosylation site" description="N-linked (GlcNAc...) asparagine" evidence="1">
    <location>
        <position position="223"/>
    </location>
</feature>
<feature type="glycosylation site" description="N-linked (GlcNAc...) asparagine" evidence="1">
    <location>
        <position position="227"/>
    </location>
</feature>
<feature type="glycosylation site" description="N-linked (GlcNAc...) asparagine" evidence="1">
    <location>
        <position position="233"/>
    </location>
</feature>
<feature type="glycosylation site" description="N-linked (GlcNAc...) asparagine" evidence="1">
    <location>
        <position position="257"/>
    </location>
</feature>
<feature type="glycosylation site" description="N-linked (GlcNAc...) asparagine" evidence="1">
    <location>
        <position position="274"/>
    </location>
</feature>
<feature type="glycosylation site" description="N-linked (GlcNAc...) asparagine" evidence="1">
    <location>
        <position position="353"/>
    </location>
</feature>
<feature type="glycosylation site" description="N-linked (GlcNAc...) asparagine" evidence="1">
    <location>
        <position position="364"/>
    </location>
</feature>
<feature type="glycosylation site" description="N-linked (GlcNAc...) asparagine" evidence="1">
    <location>
        <position position="389"/>
    </location>
</feature>
<feature type="glycosylation site" description="N-linked (GlcNAc...) asparagine" evidence="1">
    <location>
        <position position="442"/>
    </location>
</feature>
<feature type="glycosylation site" description="N-linked (GlcNAc...) asparagine" evidence="1">
    <location>
        <position position="505"/>
    </location>
</feature>
<feature type="glycosylation site" description="N-linked (GlcNAc...) asparagine" evidence="1">
    <location>
        <position position="538"/>
    </location>
</feature>
<feature type="glycosylation site" description="N-linked (GlcNAc...) asparagine" evidence="1">
    <location>
        <position position="584"/>
    </location>
</feature>
<feature type="glycosylation site" description="N-linked (GlcNAc...) asparagine" evidence="1">
    <location>
        <position position="660"/>
    </location>
</feature>
<feature type="glycosylation site" description="N-linked (GlcNAc...) asparagine" evidence="1">
    <location>
        <position position="681"/>
    </location>
</feature>
<feature type="glycosylation site" description="N-linked (GlcNAc...) asparagine" evidence="1">
    <location>
        <position position="691"/>
    </location>
</feature>
<feature type="glycosylation site" description="N-linked (GlcNAc...) asparagine" evidence="1">
    <location>
        <position position="741"/>
    </location>
</feature>
<feature type="glycosylation site" description="N-linked (GlcNAc...) asparagine" evidence="1">
    <location>
        <position position="925"/>
    </location>
</feature>
<feature type="glycosylation site" description="N-linked (GlcNAc...) asparagine" evidence="1">
    <location>
        <position position="1141"/>
    </location>
</feature>
<evidence type="ECO:0000255" key="1"/>
<evidence type="ECO:0000256" key="2">
    <source>
        <dbReference type="SAM" id="MobiDB-lite"/>
    </source>
</evidence>
<evidence type="ECO:0000305" key="3"/>
<organism>
    <name type="scientific">Saccharomyces uvarum</name>
    <name type="common">Yeast</name>
    <name type="synonym">Saccharomyces bayanus var. uvarum</name>
    <dbReference type="NCBI Taxonomy" id="230603"/>
    <lineage>
        <taxon>Eukaryota</taxon>
        <taxon>Fungi</taxon>
        <taxon>Dikarya</taxon>
        <taxon>Ascomycota</taxon>
        <taxon>Saccharomycotina</taxon>
        <taxon>Saccharomycetes</taxon>
        <taxon>Saccharomycetales</taxon>
        <taxon>Saccharomycetaceae</taxon>
        <taxon>Saccharomyces</taxon>
    </lineage>
</organism>
<protein>
    <recommendedName>
        <fullName>High-affinity potassium transport protein</fullName>
    </recommendedName>
</protein>
<gene>
    <name type="primary">TRK1</name>
</gene>
<accession>P28569</accession>
<sequence>MHIRGTMSRVPTLASFEVRYKKSFGHKFRDFIALCGHYCSPIKKYIFPNFIAVHYFYTIVLTLITSILLYPVKNIRYIDALFLAAGAVTQGGLNTVDVNNLTLYQQIILYIICCISTPIAVHSCLAFVRLYWFERYFDGIRDSSRLNFKMRRTKTILERELTARTMTKSKTGGTQRVSRPGKSDKRDDFQEKLFNGEMVNRDEQDSVHSSHNSRDSNSNANTNSSNNNSINHNGSSGSLDDYVREDKADEVEKYHGNKSYSSVGSSSNTATDENISQKLKPSSLRFDESQNKRKRTGAPSEKFAKRRGSRDITPEDMYRSIMMLQGEHEGTAEDEGPPLVIGSPTDGTRNMDNGSESKSAPTMNESKIRIQDKGAKISLDQDSVLHSSNSSACTSDEDSLPTNFGGTTPSLSAKPRESSSGPIAFTEGENADRKQGPSIQFNITKPPRKASKSKRVSTMDDLNPRSIFPHQKKSSKGYIMKHLPKARRIRQQIKRRLSTGSIDKNSSSDALDRGLISGLNDDDDGNEGDNMEEYFADNESGDEDDRMQQSEPQSGSELKLKQQQQHQLQQNLHRMYKTKSFDDNRSKPVLMERSKTIDMAEARDLNELARTPDFQKMVYKNWKAHHRNKPNFKRRGWNGKMFEHGPYTSDSDHNYQDNGNNSNSIVHYAESILHRDNSHRNGSEDVSSDSNETTYPLNGNNDHSQNDANGYPTYNDEEEGYYGLHFDSDYNLDPHHALSSNASKNYLSWQPTIGRNSNFLGLTRAQKDELGGVEYRAIKLLCTILVVYYVGWHIVSFVMLVPWINLKKHYSDIVRSDGVSPTWWGFWTAMSAFNDLGLTLTPDSMMSFDKAVYPLIVMIWFIIIGNTGFPILLRCIIWIMFKLSPDLSQMRESLGFLLDHPRRCFTLLFPKAATWWLLLTLVGLNFTDWILFIILDFGSTVVKSLSKGYRVLVGLFQSVSTRTAGFSVVDLSQLHPSIQVSYMLMMYVSVLPLAISIRRTNVYEEQSLGLYGEMGGKPEDTDTEEDGDCDDEDDDNEEEESHEGGSSQRGKSKKETKKKKKRKENENPNEESTKSFIGAHLRRQLSFDLWFLFLGLFIICICERDKIKDIQRPNFNVFTILFEIVSAYGTVGLSLGYPNTNQSFSRQLTTLSKLIIIAMLIRGKNRGLPYSLDRAIILPSDRLEHIDHIEDLKLKRQARTDTDDPMTEHLKRSISDAKHRWDELKHKRSLSRSSKRSTKTN</sequence>
<dbReference type="EMBL" id="M57508">
    <property type="protein sequence ID" value="AAA34661.1"/>
    <property type="molecule type" value="Genomic_DNA"/>
</dbReference>
<dbReference type="SMR" id="P28569"/>
<dbReference type="GlyCosmos" id="P28569">
    <property type="glycosylation" value="19 sites, No reported glycans"/>
</dbReference>
<dbReference type="GO" id="GO:0005886">
    <property type="term" value="C:plasma membrane"/>
    <property type="evidence" value="ECO:0007669"/>
    <property type="project" value="InterPro"/>
</dbReference>
<dbReference type="GO" id="GO:0140107">
    <property type="term" value="F:high-affinity potassium ion transmembrane transporter activity"/>
    <property type="evidence" value="ECO:0007669"/>
    <property type="project" value="TreeGrafter"/>
</dbReference>
<dbReference type="GO" id="GO:0030007">
    <property type="term" value="P:intracellular potassium ion homeostasis"/>
    <property type="evidence" value="ECO:0007669"/>
    <property type="project" value="InterPro"/>
</dbReference>
<dbReference type="GO" id="GO:1990573">
    <property type="term" value="P:potassium ion import across plasma membrane"/>
    <property type="evidence" value="ECO:0007669"/>
    <property type="project" value="TreeGrafter"/>
</dbReference>
<dbReference type="InterPro" id="IPR003445">
    <property type="entry name" value="Cat_transpt"/>
</dbReference>
<dbReference type="InterPro" id="IPR004773">
    <property type="entry name" value="K/Na_transp_Trk1/HKT1"/>
</dbReference>
<dbReference type="InterPro" id="IPR015958">
    <property type="entry name" value="Trk1_fungi"/>
</dbReference>
<dbReference type="InterPro" id="IPR051143">
    <property type="entry name" value="TrkH_K-transport"/>
</dbReference>
<dbReference type="NCBIfam" id="TIGR00934">
    <property type="entry name" value="2a38euk"/>
    <property type="match status" value="1"/>
</dbReference>
<dbReference type="PANTHER" id="PTHR31064:SF30">
    <property type="entry name" value="HIGH-AFFINITY POTASSIUM TRANSPORT PROTEIN-RELATED"/>
    <property type="match status" value="1"/>
</dbReference>
<dbReference type="PANTHER" id="PTHR31064">
    <property type="entry name" value="POTASSIUM TRANSPORT PROTEIN DDB_G0292412-RELATED"/>
    <property type="match status" value="1"/>
</dbReference>
<dbReference type="Pfam" id="PF02386">
    <property type="entry name" value="TrkH"/>
    <property type="match status" value="1"/>
</dbReference>
<dbReference type="PIRSF" id="PIRSF002450">
    <property type="entry name" value="K+_transpter_TRK"/>
    <property type="match status" value="1"/>
</dbReference>
<name>TRK1_SACUV</name>